<geneLocation type="chloroplast"/>
<evidence type="ECO:0000255" key="1">
    <source>
        <dbReference type="HAMAP-Rule" id="MF_00482"/>
    </source>
</evidence>
<evidence type="ECO:0007829" key="2">
    <source>
        <dbReference type="PDB" id="7BLZ"/>
    </source>
</evidence>
<protein>
    <recommendedName>
        <fullName evidence="1">Photosystem I P700 chlorophyll a apoprotein A2</fullName>
        <ecNumber evidence="1">1.97.1.12</ecNumber>
    </recommendedName>
    <alternativeName>
        <fullName evidence="1">PSI-B</fullName>
    </alternativeName>
    <alternativeName>
        <fullName evidence="1">PsaB</fullName>
    </alternativeName>
</protein>
<organism>
    <name type="scientific">Cyanidioschyzon merolae (strain NIES-3377 / 10D)</name>
    <name type="common">Unicellular red alga</name>
    <dbReference type="NCBI Taxonomy" id="280699"/>
    <lineage>
        <taxon>Eukaryota</taxon>
        <taxon>Rhodophyta</taxon>
        <taxon>Bangiophyceae</taxon>
        <taxon>Cyanidiales</taxon>
        <taxon>Cyanidiaceae</taxon>
        <taxon>Cyanidioschyzon</taxon>
    </lineage>
</organism>
<reference key="1">
    <citation type="journal article" date="2003" name="DNA Res.">
        <title>Complete sequence and analysis of the plastid genome of the unicellular red alga Cyanidioschyzon merolae.</title>
        <authorList>
            <person name="Ohta N."/>
            <person name="Matsuzaki M."/>
            <person name="Misumi O."/>
            <person name="Miyagishima S.-Y."/>
            <person name="Nozaki H."/>
            <person name="Tanaka K."/>
            <person name="Shin-i T."/>
            <person name="Kohara Y."/>
            <person name="Kuroiwa T."/>
        </authorList>
    </citation>
    <scope>NUCLEOTIDE SEQUENCE [LARGE SCALE GENOMIC DNA]</scope>
    <source>
        <strain>NIES-3377 / 10D</strain>
    </source>
</reference>
<dbReference type="EC" id="1.97.1.12" evidence="1"/>
<dbReference type="EMBL" id="AB002583">
    <property type="protein sequence ID" value="BAC76207.1"/>
    <property type="molecule type" value="Genomic_DNA"/>
</dbReference>
<dbReference type="RefSeq" id="NP_849045.1">
    <property type="nucleotide sequence ID" value="NC_004799.1"/>
</dbReference>
<dbReference type="PDB" id="5ZGB">
    <property type="method" value="EM"/>
    <property type="resolution" value="3.63 A"/>
    <property type="chains" value="B=1-732"/>
</dbReference>
<dbReference type="PDB" id="5ZGH">
    <property type="method" value="EM"/>
    <property type="resolution" value="3.82 A"/>
    <property type="chains" value="B=1-732"/>
</dbReference>
<dbReference type="PDB" id="6FOS">
    <property type="method" value="X-ray"/>
    <property type="resolution" value="4.00 A"/>
    <property type="chains" value="B=8-732"/>
</dbReference>
<dbReference type="PDB" id="7BLZ">
    <property type="method" value="EM"/>
    <property type="resolution" value="3.10 A"/>
    <property type="chains" value="B=2-732"/>
</dbReference>
<dbReference type="PDBsum" id="5ZGB"/>
<dbReference type="PDBsum" id="5ZGH"/>
<dbReference type="PDBsum" id="6FOS"/>
<dbReference type="PDBsum" id="7BLZ"/>
<dbReference type="EMDB" id="EMD-12228"/>
<dbReference type="EMDB" id="EMD-6929"/>
<dbReference type="SMR" id="Q85FY6"/>
<dbReference type="STRING" id="280699.Q85FY6"/>
<dbReference type="EnsemblPlants" id="CMV136CT">
    <property type="protein sequence ID" value="CMV136CT"/>
    <property type="gene ID" value="CMV136C"/>
</dbReference>
<dbReference type="GeneID" id="844936"/>
<dbReference type="Gramene" id="CMV136CT">
    <property type="protein sequence ID" value="CMV136CT"/>
    <property type="gene ID" value="CMV136C"/>
</dbReference>
<dbReference type="KEGG" id="cme:CymeCp113"/>
<dbReference type="eggNOG" id="ENOG502QRYE">
    <property type="taxonomic scope" value="Eukaryota"/>
</dbReference>
<dbReference type="HOGENOM" id="CLU_016126_1_0_1"/>
<dbReference type="Proteomes" id="UP000007014">
    <property type="component" value="Chloroplast"/>
</dbReference>
<dbReference type="GO" id="GO:0009535">
    <property type="term" value="C:chloroplast thylakoid membrane"/>
    <property type="evidence" value="ECO:0007669"/>
    <property type="project" value="UniProtKB-SubCell"/>
</dbReference>
<dbReference type="GO" id="GO:0009522">
    <property type="term" value="C:photosystem I"/>
    <property type="evidence" value="ECO:0007669"/>
    <property type="project" value="UniProtKB-KW"/>
</dbReference>
<dbReference type="GO" id="GO:0051539">
    <property type="term" value="F:4 iron, 4 sulfur cluster binding"/>
    <property type="evidence" value="ECO:0007669"/>
    <property type="project" value="UniProtKB-KW"/>
</dbReference>
<dbReference type="GO" id="GO:0016168">
    <property type="term" value="F:chlorophyll binding"/>
    <property type="evidence" value="ECO:0007669"/>
    <property type="project" value="UniProtKB-KW"/>
</dbReference>
<dbReference type="GO" id="GO:0009055">
    <property type="term" value="F:electron transfer activity"/>
    <property type="evidence" value="ECO:0007669"/>
    <property type="project" value="UniProtKB-UniRule"/>
</dbReference>
<dbReference type="GO" id="GO:0000287">
    <property type="term" value="F:magnesium ion binding"/>
    <property type="evidence" value="ECO:0007669"/>
    <property type="project" value="UniProtKB-UniRule"/>
</dbReference>
<dbReference type="GO" id="GO:0016491">
    <property type="term" value="F:oxidoreductase activity"/>
    <property type="evidence" value="ECO:0007669"/>
    <property type="project" value="UniProtKB-KW"/>
</dbReference>
<dbReference type="GO" id="GO:0015979">
    <property type="term" value="P:photosynthesis"/>
    <property type="evidence" value="ECO:0007669"/>
    <property type="project" value="UniProtKB-UniRule"/>
</dbReference>
<dbReference type="FunFam" id="1.20.1130.10:FF:000001">
    <property type="entry name" value="Photosystem I P700 chlorophyll a apoprotein A2"/>
    <property type="match status" value="1"/>
</dbReference>
<dbReference type="Gene3D" id="1.20.1130.10">
    <property type="entry name" value="Photosystem I PsaA/PsaB"/>
    <property type="match status" value="1"/>
</dbReference>
<dbReference type="HAMAP" id="MF_00482">
    <property type="entry name" value="PSI_PsaB"/>
    <property type="match status" value="1"/>
</dbReference>
<dbReference type="InterPro" id="IPR001280">
    <property type="entry name" value="PSI_PsaA/B"/>
</dbReference>
<dbReference type="InterPro" id="IPR020586">
    <property type="entry name" value="PSI_PsaA/B_CS"/>
</dbReference>
<dbReference type="InterPro" id="IPR036408">
    <property type="entry name" value="PSI_PsaA/B_sf"/>
</dbReference>
<dbReference type="InterPro" id="IPR006244">
    <property type="entry name" value="PSI_PsaB"/>
</dbReference>
<dbReference type="NCBIfam" id="TIGR01336">
    <property type="entry name" value="psaB"/>
    <property type="match status" value="1"/>
</dbReference>
<dbReference type="PANTHER" id="PTHR30128">
    <property type="entry name" value="OUTER MEMBRANE PROTEIN, OMPA-RELATED"/>
    <property type="match status" value="1"/>
</dbReference>
<dbReference type="PANTHER" id="PTHR30128:SF19">
    <property type="entry name" value="PHOTOSYSTEM I P700 CHLOROPHYLL A APOPROTEIN A1-RELATED"/>
    <property type="match status" value="1"/>
</dbReference>
<dbReference type="Pfam" id="PF00223">
    <property type="entry name" value="PsaA_PsaB"/>
    <property type="match status" value="1"/>
</dbReference>
<dbReference type="PIRSF" id="PIRSF002905">
    <property type="entry name" value="PSI_A"/>
    <property type="match status" value="1"/>
</dbReference>
<dbReference type="PRINTS" id="PR00257">
    <property type="entry name" value="PHOTSYSPSAAB"/>
</dbReference>
<dbReference type="SUPFAM" id="SSF81558">
    <property type="entry name" value="Photosystem I subunits PsaA/PsaB"/>
    <property type="match status" value="1"/>
</dbReference>
<dbReference type="PROSITE" id="PS00419">
    <property type="entry name" value="PHOTOSYSTEM_I_PSAAB"/>
    <property type="match status" value="1"/>
</dbReference>
<feature type="chain" id="PRO_0000088612" description="Photosystem I P700 chlorophyll a apoprotein A2">
    <location>
        <begin position="1"/>
        <end position="732"/>
    </location>
</feature>
<feature type="transmembrane region" description="Helical; Name=I" evidence="1">
    <location>
        <begin position="46"/>
        <end position="69"/>
    </location>
</feature>
<feature type="transmembrane region" description="Helical; Name=II" evidence="1">
    <location>
        <begin position="133"/>
        <end position="156"/>
    </location>
</feature>
<feature type="transmembrane region" description="Helical; Name=III" evidence="1">
    <location>
        <begin position="173"/>
        <end position="197"/>
    </location>
</feature>
<feature type="transmembrane region" description="Helical; Name=IV" evidence="1">
    <location>
        <begin position="271"/>
        <end position="289"/>
    </location>
</feature>
<feature type="transmembrane region" description="Helical; Name=V" evidence="1">
    <location>
        <begin position="328"/>
        <end position="351"/>
    </location>
</feature>
<feature type="transmembrane region" description="Helical; Name=VI" evidence="1">
    <location>
        <begin position="367"/>
        <end position="393"/>
    </location>
</feature>
<feature type="transmembrane region" description="Helical; Name=VII" evidence="1">
    <location>
        <begin position="415"/>
        <end position="437"/>
    </location>
</feature>
<feature type="transmembrane region" description="Helical; Name=VIII" evidence="1">
    <location>
        <begin position="515"/>
        <end position="533"/>
    </location>
</feature>
<feature type="transmembrane region" description="Helical; Name=IX" evidence="1">
    <location>
        <begin position="573"/>
        <end position="594"/>
    </location>
</feature>
<feature type="transmembrane region" description="Helical; Name=X" evidence="1">
    <location>
        <begin position="641"/>
        <end position="663"/>
    </location>
</feature>
<feature type="transmembrane region" description="Helical; Name=XI" evidence="1">
    <location>
        <begin position="705"/>
        <end position="725"/>
    </location>
</feature>
<feature type="binding site" evidence="1">
    <location>
        <position position="557"/>
    </location>
    <ligand>
        <name>[4Fe-4S] cluster</name>
        <dbReference type="ChEBI" id="CHEBI:49883"/>
        <note>ligand shared between dimeric partners</note>
    </ligand>
</feature>
<feature type="binding site" evidence="1">
    <location>
        <position position="566"/>
    </location>
    <ligand>
        <name>[4Fe-4S] cluster</name>
        <dbReference type="ChEBI" id="CHEBI:49883"/>
        <note>ligand shared between dimeric partners</note>
    </ligand>
</feature>
<feature type="binding site" description="axial binding residue" evidence="1">
    <location>
        <position position="652"/>
    </location>
    <ligand>
        <name>chlorophyll a</name>
        <dbReference type="ChEBI" id="CHEBI:58416"/>
        <label>B1</label>
    </ligand>
    <ligandPart>
        <name>Mg</name>
        <dbReference type="ChEBI" id="CHEBI:25107"/>
    </ligandPart>
</feature>
<feature type="binding site" description="axial binding residue" evidence="1">
    <location>
        <position position="660"/>
    </location>
    <ligand>
        <name>chlorophyll a</name>
        <dbReference type="ChEBI" id="CHEBI:58416"/>
        <label>B3</label>
    </ligand>
    <ligandPart>
        <name>Mg</name>
        <dbReference type="ChEBI" id="CHEBI:25107"/>
    </ligandPart>
</feature>
<feature type="binding site" evidence="1">
    <location>
        <position position="668"/>
    </location>
    <ligand>
        <name>chlorophyll a</name>
        <dbReference type="ChEBI" id="CHEBI:58416"/>
        <label>B3</label>
    </ligand>
</feature>
<feature type="binding site" evidence="1">
    <location>
        <position position="669"/>
    </location>
    <ligand>
        <name>phylloquinone</name>
        <dbReference type="ChEBI" id="CHEBI:18067"/>
        <label>B</label>
    </ligand>
</feature>
<feature type="helix" evidence="2">
    <location>
        <begin position="10"/>
        <end position="13"/>
    </location>
</feature>
<feature type="helix" evidence="2">
    <location>
        <begin position="19"/>
        <end position="26"/>
    </location>
</feature>
<feature type="helix" evidence="2">
    <location>
        <begin position="31"/>
        <end position="33"/>
    </location>
</feature>
<feature type="helix" evidence="2">
    <location>
        <begin position="39"/>
        <end position="70"/>
    </location>
</feature>
<feature type="helix" evidence="2">
    <location>
        <begin position="74"/>
        <end position="79"/>
    </location>
</feature>
<feature type="turn" evidence="2">
    <location>
        <begin position="81"/>
        <end position="83"/>
    </location>
</feature>
<feature type="helix" evidence="2">
    <location>
        <begin position="98"/>
        <end position="104"/>
    </location>
</feature>
<feature type="strand" evidence="2">
    <location>
        <begin position="107"/>
        <end position="111"/>
    </location>
</feature>
<feature type="helix" evidence="2">
    <location>
        <begin position="118"/>
        <end position="125"/>
    </location>
</feature>
<feature type="helix" evidence="2">
    <location>
        <begin position="130"/>
        <end position="154"/>
    </location>
</feature>
<feature type="helix" evidence="2">
    <location>
        <begin position="163"/>
        <end position="166"/>
    </location>
</feature>
<feature type="helix" evidence="2">
    <location>
        <begin position="169"/>
        <end position="178"/>
    </location>
</feature>
<feature type="turn" evidence="2">
    <location>
        <begin position="179"/>
        <end position="181"/>
    </location>
</feature>
<feature type="helix" evidence="2">
    <location>
        <begin position="182"/>
        <end position="194"/>
    </location>
</feature>
<feature type="helix" evidence="2">
    <location>
        <begin position="196"/>
        <end position="200"/>
    </location>
</feature>
<feature type="turn" evidence="2">
    <location>
        <begin position="207"/>
        <end position="212"/>
    </location>
</feature>
<feature type="turn" evidence="2">
    <location>
        <begin position="217"/>
        <end position="220"/>
    </location>
</feature>
<feature type="helix" evidence="2">
    <location>
        <begin position="221"/>
        <end position="225"/>
    </location>
</feature>
<feature type="helix" evidence="2">
    <location>
        <begin position="228"/>
        <end position="232"/>
    </location>
</feature>
<feature type="strand" evidence="2">
    <location>
        <begin position="258"/>
        <end position="260"/>
    </location>
</feature>
<feature type="turn" evidence="2">
    <location>
        <begin position="261"/>
        <end position="264"/>
    </location>
</feature>
<feature type="helix" evidence="2">
    <location>
        <begin position="268"/>
        <end position="285"/>
    </location>
</feature>
<feature type="helix" evidence="2">
    <location>
        <begin position="299"/>
        <end position="305"/>
    </location>
</feature>
<feature type="turn" evidence="2">
    <location>
        <begin position="316"/>
        <end position="319"/>
    </location>
</feature>
<feature type="helix" evidence="2">
    <location>
        <begin position="320"/>
        <end position="325"/>
    </location>
</feature>
<feature type="helix" evidence="2">
    <location>
        <begin position="328"/>
        <end position="352"/>
    </location>
</feature>
<feature type="turn" evidence="2">
    <location>
        <begin position="357"/>
        <end position="361"/>
    </location>
</feature>
<feature type="helix" evidence="2">
    <location>
        <begin position="363"/>
        <end position="394"/>
    </location>
</feature>
<feature type="turn" evidence="2">
    <location>
        <begin position="398"/>
        <end position="400"/>
    </location>
</feature>
<feature type="helix" evidence="2">
    <location>
        <begin position="405"/>
        <end position="411"/>
    </location>
</feature>
<feature type="helix" evidence="2">
    <location>
        <begin position="413"/>
        <end position="443"/>
    </location>
</feature>
<feature type="helix" evidence="2">
    <location>
        <begin position="447"/>
        <end position="449"/>
    </location>
</feature>
<feature type="helix" evidence="2">
    <location>
        <begin position="456"/>
        <end position="465"/>
    </location>
</feature>
<feature type="helix" evidence="2">
    <location>
        <begin position="475"/>
        <end position="477"/>
    </location>
</feature>
<feature type="helix" evidence="2">
    <location>
        <begin position="482"/>
        <end position="487"/>
    </location>
</feature>
<feature type="turn" evidence="2">
    <location>
        <begin position="488"/>
        <end position="491"/>
    </location>
</feature>
<feature type="helix" evidence="2">
    <location>
        <begin position="492"/>
        <end position="499"/>
    </location>
</feature>
<feature type="strand" evidence="2">
    <location>
        <begin position="502"/>
        <end position="505"/>
    </location>
</feature>
<feature type="helix" evidence="2">
    <location>
        <begin position="512"/>
        <end position="537"/>
    </location>
</feature>
<feature type="helix" evidence="2">
    <location>
        <begin position="548"/>
        <end position="551"/>
    </location>
</feature>
<feature type="helix" evidence="2">
    <location>
        <begin position="570"/>
        <end position="600"/>
    </location>
</feature>
<feature type="helix" evidence="2">
    <location>
        <begin position="604"/>
        <end position="610"/>
    </location>
</feature>
<feature type="helix" evidence="2">
    <location>
        <begin position="614"/>
        <end position="619"/>
    </location>
</feature>
<feature type="turn" evidence="2">
    <location>
        <begin position="620"/>
        <end position="623"/>
    </location>
</feature>
<feature type="helix" evidence="2">
    <location>
        <begin position="624"/>
        <end position="626"/>
    </location>
</feature>
<feature type="helix" evidence="2">
    <location>
        <begin position="627"/>
        <end position="630"/>
    </location>
</feature>
<feature type="strand" evidence="2">
    <location>
        <begin position="632"/>
        <end position="634"/>
    </location>
</feature>
<feature type="helix" evidence="2">
    <location>
        <begin position="642"/>
        <end position="663"/>
    </location>
</feature>
<feature type="helix" evidence="2">
    <location>
        <begin position="668"/>
        <end position="681"/>
    </location>
</feature>
<feature type="strand" evidence="2">
    <location>
        <begin position="686"/>
        <end position="689"/>
    </location>
</feature>
<feature type="strand" evidence="2">
    <location>
        <begin position="692"/>
        <end position="694"/>
    </location>
</feature>
<feature type="helix" evidence="2">
    <location>
        <begin position="700"/>
        <end position="731"/>
    </location>
</feature>
<gene>
    <name evidence="1" type="primary">psaB</name>
</gene>
<keyword id="KW-0002">3D-structure</keyword>
<keyword id="KW-0004">4Fe-4S</keyword>
<keyword id="KW-0148">Chlorophyll</keyword>
<keyword id="KW-0150">Chloroplast</keyword>
<keyword id="KW-0157">Chromophore</keyword>
<keyword id="KW-0249">Electron transport</keyword>
<keyword id="KW-0408">Iron</keyword>
<keyword id="KW-0411">Iron-sulfur</keyword>
<keyword id="KW-0460">Magnesium</keyword>
<keyword id="KW-0472">Membrane</keyword>
<keyword id="KW-0479">Metal-binding</keyword>
<keyword id="KW-0560">Oxidoreductase</keyword>
<keyword id="KW-0602">Photosynthesis</keyword>
<keyword id="KW-0603">Photosystem I</keyword>
<keyword id="KW-0934">Plastid</keyword>
<keyword id="KW-1185">Reference proteome</keyword>
<keyword id="KW-0793">Thylakoid</keyword>
<keyword id="KW-0812">Transmembrane</keyword>
<keyword id="KW-1133">Transmembrane helix</keyword>
<keyword id="KW-0813">Transport</keyword>
<sequence length="732" mass="82027">MATKFPKFSQALASDPTTRRIWYGIATAHDFESHDGMTEENLYQKIFASHFGHLAIIFLWTSGNLFHVAWQGNFEQWVANPLKTKPLAHAIWDPHFGQAALKAFTRGDTVANISYSGVYHWWYTIGIRNNVELYTGALGLLVLSAVFLLAGWLHIQPKFKPSLSWFKNNESRLNHHLAGLFGVSSLAWTGHLVHVAIPASRGQHVGWDNFIMTPPHPAGLQPFFTGNWSVYAQSPDSMQHVFGTSQGAGTAILTFLGGFHPQTQSLWLTDMAHHHLAIAVIFIVAGHMYRTNFGIGHNLKTILEAHRPPSGRLGKGHIGIYQTLTNSLHFQLGLALASLSVVTSLVAQHMYAMPPYAYMAFDYVTQSALYTHHQYIAGLLIVGAFAHGAIFFIRDYDPEQNQDNVLARMLAHKEAVISHLSWVSLFLGFHTLGLYVHNDVVVAFGNPEKQILIEPIFAQWIQATSGKMLYGFQVLLSSSTSNASVAAQQLWLPGWLEAVNNESNSLFLTIGPGDFLVHHAIALGLHTTTLILVKGALDARGSKLMPDKKDFGYSFPCDGPGRGGTCDISAWDAFYLAMFWMLNTIGWVTFYWHWKHLSLWQGNVAQFNESSTYLMGWLRDYLWLNSSPLINGYNPYGMNSLAVWSWMFLFAHLVWATGFMFLISWRGYWQELIETLAWAHERTPLANLIRWKDKPVALSIVQARLVGLVHFTVGYILTYAAFVIASTAGKFS</sequence>
<accession>Q85FY6</accession>
<name>PSAB_CYAM1</name>
<proteinExistence type="evidence at protein level"/>
<comment type="function">
    <text evidence="1">PsaA and PsaB bind P700, the primary electron donor of photosystem I (PSI), as well as the electron acceptors A0, A1 and FX. PSI is a plastocyanin/cytochrome c6-ferredoxin oxidoreductase, converting photonic excitation into a charge separation, which transfers an electron from the donor P700 chlorophyll pair to the spectroscopically characterized acceptors A0, A1, FX, FA and FB in turn. Oxidized P700 is reduced on the lumenal side of the thylakoid membrane by plastocyanin or cytochrome c6.</text>
</comment>
<comment type="catalytic activity">
    <reaction evidence="1">
        <text>reduced [plastocyanin] + hnu + oxidized [2Fe-2S]-[ferredoxin] = oxidized [plastocyanin] + reduced [2Fe-2S]-[ferredoxin]</text>
        <dbReference type="Rhea" id="RHEA:30407"/>
        <dbReference type="Rhea" id="RHEA-COMP:10000"/>
        <dbReference type="Rhea" id="RHEA-COMP:10001"/>
        <dbReference type="Rhea" id="RHEA-COMP:10039"/>
        <dbReference type="Rhea" id="RHEA-COMP:10040"/>
        <dbReference type="ChEBI" id="CHEBI:29036"/>
        <dbReference type="ChEBI" id="CHEBI:30212"/>
        <dbReference type="ChEBI" id="CHEBI:33737"/>
        <dbReference type="ChEBI" id="CHEBI:33738"/>
        <dbReference type="ChEBI" id="CHEBI:49552"/>
        <dbReference type="EC" id="1.97.1.12"/>
    </reaction>
</comment>
<comment type="cofactor">
    <text evidence="1">P700 is a chlorophyll a/chlorophyll a' dimer, A0 is one or more chlorophyll a, A1 is one or both phylloquinones and FX is a shared 4Fe-4S iron-sulfur center.</text>
</comment>
<comment type="subunit">
    <text evidence="1">The PsaA/B heterodimer binds the P700 chlorophyll special pair and subsequent electron acceptors. PSI consists of a core antenna complex that captures photons, and an electron transfer chain that converts photonic excitation into a charge separation. The eukaryotic PSI reaction center is composed of at least 11 subunits.</text>
</comment>
<comment type="subcellular location">
    <subcellularLocation>
        <location>Plastid</location>
        <location>Chloroplast thylakoid membrane</location>
        <topology>Multi-pass membrane protein</topology>
    </subcellularLocation>
</comment>
<comment type="similarity">
    <text evidence="1">Belongs to the PsaA/PsaB family.</text>
</comment>